<name>AVR4_CHICK</name>
<proteinExistence type="evidence at protein level"/>
<dbReference type="EMBL" id="Z22883">
    <property type="status" value="NOT_ANNOTATED_CDS"/>
    <property type="molecule type" value="Genomic_DNA"/>
</dbReference>
<dbReference type="PIR" id="S42204">
    <property type="entry name" value="S42204"/>
</dbReference>
<dbReference type="PDB" id="1Y52">
    <property type="method" value="X-ray"/>
    <property type="resolution" value="1.70 A"/>
    <property type="chains" value="X/Y=25-150"/>
</dbReference>
<dbReference type="PDB" id="1Y53">
    <property type="method" value="X-ray"/>
    <property type="resolution" value="1.20 A"/>
    <property type="chains" value="X/Y=25-150"/>
</dbReference>
<dbReference type="PDB" id="1Y55">
    <property type="method" value="X-ray"/>
    <property type="resolution" value="1.00 A"/>
    <property type="chains" value="X/Y=25-150"/>
</dbReference>
<dbReference type="PDB" id="2FHL">
    <property type="method" value="X-ray"/>
    <property type="resolution" value="1.05 A"/>
    <property type="chains" value="A/B=25-145"/>
</dbReference>
<dbReference type="PDB" id="2FHN">
    <property type="method" value="X-ray"/>
    <property type="resolution" value="1.30 A"/>
    <property type="chains" value="X/Y=25-145"/>
</dbReference>
<dbReference type="PDB" id="2MF6">
    <property type="method" value="NMR"/>
    <property type="chains" value="A/B/C/D=62-82"/>
</dbReference>
<dbReference type="PDB" id="2OF8">
    <property type="method" value="X-ray"/>
    <property type="resolution" value="1.05 A"/>
    <property type="chains" value="A/B=25-150"/>
</dbReference>
<dbReference type="PDB" id="2OF9">
    <property type="method" value="X-ray"/>
    <property type="resolution" value="1.35 A"/>
    <property type="chains" value="A/B=25-150"/>
</dbReference>
<dbReference type="PDB" id="2OFA">
    <property type="method" value="X-ray"/>
    <property type="resolution" value="1.50 A"/>
    <property type="chains" value="A/B=25-150"/>
</dbReference>
<dbReference type="PDB" id="2OFB">
    <property type="method" value="X-ray"/>
    <property type="resolution" value="1.16 A"/>
    <property type="chains" value="A/B=25-150"/>
</dbReference>
<dbReference type="PDB" id="3MM0">
    <property type="method" value="X-ray"/>
    <property type="resolution" value="2.70 A"/>
    <property type="chains" value="A/B/C/D/E/F/G/H/I/K/M/N=62-82"/>
</dbReference>
<dbReference type="PDB" id="4BCS">
    <property type="method" value="X-ray"/>
    <property type="resolution" value="1.80 A"/>
    <property type="chains" value="A/B=25-147"/>
</dbReference>
<dbReference type="PDBsum" id="1Y52"/>
<dbReference type="PDBsum" id="1Y53"/>
<dbReference type="PDBsum" id="1Y55"/>
<dbReference type="PDBsum" id="2FHL"/>
<dbReference type="PDBsum" id="2FHN"/>
<dbReference type="PDBsum" id="2MF6"/>
<dbReference type="PDBsum" id="2OF8"/>
<dbReference type="PDBsum" id="2OF9"/>
<dbReference type="PDBsum" id="2OFA"/>
<dbReference type="PDBsum" id="2OFB"/>
<dbReference type="PDBsum" id="3MM0"/>
<dbReference type="PDBsum" id="4BCS"/>
<dbReference type="SMR" id="P56734"/>
<dbReference type="FunCoup" id="P56734">
    <property type="interactions" value="7"/>
</dbReference>
<dbReference type="STRING" id="9031.ENSGALP00000003839"/>
<dbReference type="GlyCosmos" id="P56734">
    <property type="glycosylation" value="3 sites, No reported glycans"/>
</dbReference>
<dbReference type="GlyGen" id="P56734">
    <property type="glycosylation" value="3 sites"/>
</dbReference>
<dbReference type="iPTMnet" id="P56734"/>
<dbReference type="PaxDb" id="9031-ENSGALP00000033787"/>
<dbReference type="VEuPathDB" id="HostDB:LOC121108603"/>
<dbReference type="eggNOG" id="ENOG502S55G">
    <property type="taxonomic scope" value="Eukaryota"/>
</dbReference>
<dbReference type="InParanoid" id="P56734"/>
<dbReference type="OMA" id="ENIKNDW"/>
<dbReference type="OrthoDB" id="2821340at2759"/>
<dbReference type="PhylomeDB" id="P56734"/>
<dbReference type="EvolutionaryTrace" id="P56734"/>
<dbReference type="Proteomes" id="UP000000539">
    <property type="component" value="Unassembled WGS sequence"/>
</dbReference>
<dbReference type="GO" id="GO:0005576">
    <property type="term" value="C:extracellular region"/>
    <property type="evidence" value="ECO:0007669"/>
    <property type="project" value="UniProtKB-SubCell"/>
</dbReference>
<dbReference type="GO" id="GO:0009374">
    <property type="term" value="F:biotin binding"/>
    <property type="evidence" value="ECO:0000318"/>
    <property type="project" value="GO_Central"/>
</dbReference>
<dbReference type="Gene3D" id="2.40.128.30">
    <property type="entry name" value="Avidin-like"/>
    <property type="match status" value="1"/>
</dbReference>
<dbReference type="InterPro" id="IPR005469">
    <property type="entry name" value="Avidin"/>
</dbReference>
<dbReference type="InterPro" id="IPR017889">
    <property type="entry name" value="Avidin-like_CS"/>
</dbReference>
<dbReference type="InterPro" id="IPR036896">
    <property type="entry name" value="Avidin-like_sf"/>
</dbReference>
<dbReference type="InterPro" id="IPR005468">
    <property type="entry name" value="Avidin/str"/>
</dbReference>
<dbReference type="InterPro" id="IPR051764">
    <property type="entry name" value="Avidin/Streptavidin-rel"/>
</dbReference>
<dbReference type="PANTHER" id="PTHR34399:SF3">
    <property type="entry name" value="AVID PROTEIN-RELATED"/>
    <property type="match status" value="1"/>
</dbReference>
<dbReference type="PANTHER" id="PTHR34399">
    <property type="entry name" value="AVIDIN-RELATED"/>
    <property type="match status" value="1"/>
</dbReference>
<dbReference type="Pfam" id="PF01382">
    <property type="entry name" value="Avidin"/>
    <property type="match status" value="1"/>
</dbReference>
<dbReference type="PRINTS" id="PR00709">
    <property type="entry name" value="AVIDIN"/>
</dbReference>
<dbReference type="SUPFAM" id="SSF50876">
    <property type="entry name" value="Avidin/streptavidin"/>
    <property type="match status" value="1"/>
</dbReference>
<dbReference type="PROSITE" id="PS00577">
    <property type="entry name" value="AVIDIN_1"/>
    <property type="match status" value="1"/>
</dbReference>
<dbReference type="PROSITE" id="PS51326">
    <property type="entry name" value="AVIDIN_2"/>
    <property type="match status" value="1"/>
</dbReference>
<protein>
    <recommendedName>
        <fullName>Avidin-related protein 4/5</fullName>
    </recommendedName>
</protein>
<feature type="signal peptide" evidence="1">
    <location>
        <begin position="1"/>
        <end position="24"/>
    </location>
</feature>
<feature type="chain" id="PRO_0000002726" description="Avidin-related protein 4/5">
    <location>
        <begin position="25"/>
        <end position="150"/>
    </location>
</feature>
<feature type="domain" description="Avidin-like" evidence="2">
    <location>
        <begin position="26"/>
        <end position="147"/>
    </location>
</feature>
<feature type="binding site" evidence="4 6 8">
    <location>
        <position position="36"/>
    </location>
    <ligand>
        <name>biotin</name>
        <dbReference type="ChEBI" id="CHEBI:57586"/>
    </ligand>
</feature>
<feature type="binding site" evidence="4 6 8">
    <location>
        <position position="40"/>
    </location>
    <ligand>
        <name>biotin</name>
        <dbReference type="ChEBI" id="CHEBI:57586"/>
    </ligand>
</feature>
<feature type="binding site" evidence="4 6 8">
    <location>
        <position position="57"/>
    </location>
    <ligand>
        <name>biotin</name>
        <dbReference type="ChEBI" id="CHEBI:57586"/>
    </ligand>
</feature>
<feature type="binding site" evidence="4 6 8">
    <location>
        <position position="59"/>
    </location>
    <ligand>
        <name>biotin</name>
        <dbReference type="ChEBI" id="CHEBI:57586"/>
    </ligand>
</feature>
<feature type="binding site" evidence="4 6 8">
    <location>
        <position position="63"/>
    </location>
    <ligand>
        <name>biotin</name>
        <dbReference type="ChEBI" id="CHEBI:57586"/>
    </ligand>
</feature>
<feature type="binding site" evidence="4 6 8">
    <location>
        <position position="95"/>
    </location>
    <ligand>
        <name>biotin</name>
        <dbReference type="ChEBI" id="CHEBI:57586"/>
    </ligand>
</feature>
<feature type="binding site" evidence="4 6 8">
    <location>
        <position position="140"/>
    </location>
    <ligand>
        <name>biotin</name>
        <dbReference type="ChEBI" id="CHEBI:57586"/>
    </ligand>
</feature>
<feature type="glycosylation site" description="N-linked (GlcNAc...) asparagine" evidence="4 6">
    <location>
        <position position="67"/>
    </location>
</feature>
<feature type="glycosylation site" description="N-linked (GlcNAc...) asparagine" evidence="1">
    <location>
        <position position="93"/>
    </location>
</feature>
<feature type="glycosylation site" description="N-linked (GlcNAc...) asparagine" evidence="4 6">
    <location>
        <position position="141"/>
    </location>
</feature>
<feature type="disulfide bond" evidence="4 6 7 8">
    <location>
        <begin position="28"/>
        <end position="105"/>
    </location>
</feature>
<feature type="strand" evidence="9">
    <location>
        <begin position="32"/>
        <end position="36"/>
    </location>
</feature>
<feature type="strand" evidence="9">
    <location>
        <begin position="41"/>
        <end position="44"/>
    </location>
</feature>
<feature type="strand" evidence="9">
    <location>
        <begin position="51"/>
        <end position="58"/>
    </location>
</feature>
<feature type="helix" evidence="9">
    <location>
        <begin position="65"/>
        <end position="67"/>
    </location>
</feature>
<feature type="strand" evidence="9">
    <location>
        <begin position="71"/>
        <end position="77"/>
    </location>
</feature>
<feature type="strand" evidence="10">
    <location>
        <begin position="80"/>
        <end position="83"/>
    </location>
</feature>
<feature type="strand" evidence="9">
    <location>
        <begin position="85"/>
        <end position="91"/>
    </location>
</feature>
<feature type="strand" evidence="11">
    <location>
        <begin position="93"/>
        <end position="96"/>
    </location>
</feature>
<feature type="strand" evidence="9">
    <location>
        <begin position="98"/>
        <end position="107"/>
    </location>
</feature>
<feature type="strand" evidence="9">
    <location>
        <begin position="113"/>
        <end position="122"/>
    </location>
</feature>
<feature type="helix" evidence="9">
    <location>
        <begin position="128"/>
        <end position="133"/>
    </location>
</feature>
<feature type="strand" evidence="9">
    <location>
        <begin position="135"/>
        <end position="144"/>
    </location>
</feature>
<organism>
    <name type="scientific">Gallus gallus</name>
    <name type="common">Chicken</name>
    <dbReference type="NCBI Taxonomy" id="9031"/>
    <lineage>
        <taxon>Eukaryota</taxon>
        <taxon>Metazoa</taxon>
        <taxon>Chordata</taxon>
        <taxon>Craniata</taxon>
        <taxon>Vertebrata</taxon>
        <taxon>Euteleostomi</taxon>
        <taxon>Archelosauria</taxon>
        <taxon>Archosauria</taxon>
        <taxon>Dinosauria</taxon>
        <taxon>Saurischia</taxon>
        <taxon>Theropoda</taxon>
        <taxon>Coelurosauria</taxon>
        <taxon>Aves</taxon>
        <taxon>Neognathae</taxon>
        <taxon>Galloanserae</taxon>
        <taxon>Galliformes</taxon>
        <taxon>Phasianidae</taxon>
        <taxon>Phasianinae</taxon>
        <taxon>Gallus</taxon>
    </lineage>
</organism>
<keyword id="KW-0002">3D-structure</keyword>
<keyword id="KW-0092">Biotin</keyword>
<keyword id="KW-1015">Disulfide bond</keyword>
<keyword id="KW-0325">Glycoprotein</keyword>
<keyword id="KW-1185">Reference proteome</keyword>
<keyword id="KW-0964">Secreted</keyword>
<keyword id="KW-0732">Signal</keyword>
<gene>
    <name type="primary">AVR4</name>
</gene>
<gene>
    <name type="primary">AVR5</name>
</gene>
<accession>P56734</accession>
<reference key="1">
    <citation type="journal article" date="1994" name="Eur. J. Biochem.">
        <title>Molecular cloning and nucleotide sequence of chicken avidin-related genes 1-5.</title>
        <authorList>
            <person name="Keinaenen R.A."/>
            <person name="Wallen M.J."/>
            <person name="Kristo P.A."/>
            <person name="Laukkanen M.O."/>
            <person name="Toimela T.A."/>
            <person name="Helenius M.A."/>
            <person name="Kulomaa M.S."/>
        </authorList>
    </citation>
    <scope>NUCLEOTIDE SEQUENCE [GENOMIC DNA]</scope>
    <source>
        <strain>White leghorn</strain>
        <tissue>Oviduct</tissue>
    </source>
</reference>
<reference key="2">
    <citation type="journal article" date="2002" name="Biochem. J.">
        <title>Chicken avidin-related proteins show altered biotin-binding and physico-chemical properties as compared with avidin.</title>
        <authorList>
            <person name="Laitinen O.H."/>
            <person name="Hytoenen V.P."/>
            <person name="Ahlroth M.K."/>
            <person name="Pentikaeinen O.T."/>
            <person name="Gallagher C."/>
            <person name="Nordlund H.R."/>
            <person name="Ovod V."/>
            <person name="Marttila A.T."/>
            <person name="Porkka E."/>
            <person name="Heino S."/>
            <person name="Johnson M.S."/>
            <person name="Airenne K.J."/>
            <person name="Kulomaa M.S."/>
        </authorList>
    </citation>
    <scope>FUNCTION</scope>
    <scope>SUBUNIT</scope>
</reference>
<reference evidence="6 7 8" key="3">
    <citation type="journal article" date="2005" name="Acta Crystallogr. D">
        <title>High-resolution crystal structure of an avidin-related protein: insight into high-affinity biotin binding and protein stability.</title>
        <authorList>
            <person name="Eisenberg-Domovich Y."/>
            <person name="Hytoenen V.P."/>
            <person name="Wilchek M."/>
            <person name="Bayer E.A."/>
            <person name="Kulomaa M.S."/>
            <person name="Livnah O."/>
        </authorList>
    </citation>
    <scope>X-RAY CRYSTALLOGRAPHY (1.7 ANGSTROMS) OF 25-150 OF MUTANT SER-146 IN COMPLEX WITH BIOTIN</scope>
    <scope>DISULFIDE BOND</scope>
    <scope>GLYCOSYLATION AT ASN-67 AND ASN-141</scope>
</reference>
<sequence>MVHTTSPLLLLLLLSLALVAPSLSARKCSLTGKWTNNLGSIMTIRAVNSRGEFTGTYLTAVADNPGNITLSPLLGIQHKRASQPTFGFTVHWNFSESTTVFTGQCFIDRNGKEVLKTMWLLRSSVNDISYDWKATRVGYNNFTRLCTVEE</sequence>
<evidence type="ECO:0000255" key="1"/>
<evidence type="ECO:0000255" key="2">
    <source>
        <dbReference type="PROSITE-ProRule" id="PRU00656"/>
    </source>
</evidence>
<evidence type="ECO:0000269" key="3">
    <source>
    </source>
</evidence>
<evidence type="ECO:0000269" key="4">
    <source>
    </source>
</evidence>
<evidence type="ECO:0000305" key="5"/>
<evidence type="ECO:0007744" key="6">
    <source>
        <dbReference type="PDB" id="1Y52"/>
    </source>
</evidence>
<evidence type="ECO:0007744" key="7">
    <source>
        <dbReference type="PDB" id="1Y53"/>
    </source>
</evidence>
<evidence type="ECO:0007744" key="8">
    <source>
        <dbReference type="PDB" id="1Y55"/>
    </source>
</evidence>
<evidence type="ECO:0007829" key="9">
    <source>
        <dbReference type="PDB" id="1Y55"/>
    </source>
</evidence>
<evidence type="ECO:0007829" key="10">
    <source>
        <dbReference type="PDB" id="2MF6"/>
    </source>
</evidence>
<evidence type="ECO:0007829" key="11">
    <source>
        <dbReference type="PDB" id="4BCS"/>
    </source>
</evidence>
<comment type="function">
    <text evidence="3">Forms a strong non-covalent specific complex with biotin.</text>
</comment>
<comment type="subunit">
    <text evidence="2 3">Homotetramer.</text>
</comment>
<comment type="subcellular location">
    <subcellularLocation>
        <location evidence="2">Secreted</location>
    </subcellularLocation>
</comment>
<comment type="miscellaneous">
    <text>The sequences of the coding regions of genes AVR4 and AVR5 are identical.</text>
</comment>
<comment type="similarity">
    <text evidence="5">Belongs to the avidin/streptavidin family.</text>
</comment>